<comment type="function">
    <text evidence="1">One of the primary rRNA binding proteins, it binds directly near the 3'-end of the 23S rRNA, where it nucleates assembly of the 50S subunit.</text>
</comment>
<comment type="subunit">
    <text evidence="1">Part of the 50S ribosomal subunit. Forms a cluster with proteins L14 and L19.</text>
</comment>
<comment type="PTM">
    <text evidence="1">Methylated by PrmB.</text>
</comment>
<comment type="similarity">
    <text evidence="1">Belongs to the universal ribosomal protein uL3 family.</text>
</comment>
<proteinExistence type="inferred from homology"/>
<accession>Q46WE4</accession>
<keyword id="KW-0488">Methylation</keyword>
<keyword id="KW-0687">Ribonucleoprotein</keyword>
<keyword id="KW-0689">Ribosomal protein</keyword>
<keyword id="KW-0694">RNA-binding</keyword>
<keyword id="KW-0699">rRNA-binding</keyword>
<protein>
    <recommendedName>
        <fullName evidence="1">Large ribosomal subunit protein uL3</fullName>
    </recommendedName>
    <alternativeName>
        <fullName evidence="3">50S ribosomal protein L3</fullName>
    </alternativeName>
</protein>
<sequence length="216" mass="22786">MSLGLVGRKVGMTRIFTDDGDSIPVTVVEVGDNRVTQIKTDETDGYTAVQVTFGARRASRVTKPLAGHLAKAGVEAGEIIREFRIDAAKAAELQTGGSLSVDLFEVGQKIDVQGVTIGKGYAGTIKRYHFASGRATHGNSRSHNVPGSIGMAQDPGRVFPGKRMTGHLGDVTRTVQNLEIAKIDAERKLLLVKGAIPGSKNGKVIVTPAVKAKAKA</sequence>
<dbReference type="EMBL" id="CP000090">
    <property type="protein sequence ID" value="AAZ62539.1"/>
    <property type="molecule type" value="Genomic_DNA"/>
</dbReference>
<dbReference type="SMR" id="Q46WE4"/>
<dbReference type="STRING" id="264198.Reut_A3179"/>
<dbReference type="KEGG" id="reu:Reut_A3179"/>
<dbReference type="eggNOG" id="COG0087">
    <property type="taxonomic scope" value="Bacteria"/>
</dbReference>
<dbReference type="HOGENOM" id="CLU_044142_4_1_4"/>
<dbReference type="OrthoDB" id="9806135at2"/>
<dbReference type="GO" id="GO:0022625">
    <property type="term" value="C:cytosolic large ribosomal subunit"/>
    <property type="evidence" value="ECO:0007669"/>
    <property type="project" value="TreeGrafter"/>
</dbReference>
<dbReference type="GO" id="GO:0019843">
    <property type="term" value="F:rRNA binding"/>
    <property type="evidence" value="ECO:0007669"/>
    <property type="project" value="UniProtKB-UniRule"/>
</dbReference>
<dbReference type="GO" id="GO:0003735">
    <property type="term" value="F:structural constituent of ribosome"/>
    <property type="evidence" value="ECO:0007669"/>
    <property type="project" value="InterPro"/>
</dbReference>
<dbReference type="GO" id="GO:0006412">
    <property type="term" value="P:translation"/>
    <property type="evidence" value="ECO:0007669"/>
    <property type="project" value="UniProtKB-UniRule"/>
</dbReference>
<dbReference type="FunFam" id="2.40.30.10:FF:000004">
    <property type="entry name" value="50S ribosomal protein L3"/>
    <property type="match status" value="1"/>
</dbReference>
<dbReference type="FunFam" id="3.30.160.810:FF:000001">
    <property type="entry name" value="50S ribosomal protein L3"/>
    <property type="match status" value="1"/>
</dbReference>
<dbReference type="Gene3D" id="3.30.160.810">
    <property type="match status" value="1"/>
</dbReference>
<dbReference type="Gene3D" id="2.40.30.10">
    <property type="entry name" value="Translation factors"/>
    <property type="match status" value="1"/>
</dbReference>
<dbReference type="HAMAP" id="MF_01325_B">
    <property type="entry name" value="Ribosomal_uL3_B"/>
    <property type="match status" value="1"/>
</dbReference>
<dbReference type="InterPro" id="IPR000597">
    <property type="entry name" value="Ribosomal_uL3"/>
</dbReference>
<dbReference type="InterPro" id="IPR019927">
    <property type="entry name" value="Ribosomal_uL3_bac/org-type"/>
</dbReference>
<dbReference type="InterPro" id="IPR019926">
    <property type="entry name" value="Ribosomal_uL3_CS"/>
</dbReference>
<dbReference type="InterPro" id="IPR009000">
    <property type="entry name" value="Transl_B-barrel_sf"/>
</dbReference>
<dbReference type="NCBIfam" id="TIGR03625">
    <property type="entry name" value="L3_bact"/>
    <property type="match status" value="1"/>
</dbReference>
<dbReference type="PANTHER" id="PTHR11229">
    <property type="entry name" value="50S RIBOSOMAL PROTEIN L3"/>
    <property type="match status" value="1"/>
</dbReference>
<dbReference type="PANTHER" id="PTHR11229:SF16">
    <property type="entry name" value="LARGE RIBOSOMAL SUBUNIT PROTEIN UL3C"/>
    <property type="match status" value="1"/>
</dbReference>
<dbReference type="Pfam" id="PF00297">
    <property type="entry name" value="Ribosomal_L3"/>
    <property type="match status" value="1"/>
</dbReference>
<dbReference type="SUPFAM" id="SSF50447">
    <property type="entry name" value="Translation proteins"/>
    <property type="match status" value="1"/>
</dbReference>
<dbReference type="PROSITE" id="PS00474">
    <property type="entry name" value="RIBOSOMAL_L3"/>
    <property type="match status" value="1"/>
</dbReference>
<reference key="1">
    <citation type="journal article" date="2010" name="PLoS ONE">
        <title>The complete multipartite genome sequence of Cupriavidus necator JMP134, a versatile pollutant degrader.</title>
        <authorList>
            <person name="Lykidis A."/>
            <person name="Perez-Pantoja D."/>
            <person name="Ledger T."/>
            <person name="Mavromatis K."/>
            <person name="Anderson I.J."/>
            <person name="Ivanova N.N."/>
            <person name="Hooper S.D."/>
            <person name="Lapidus A."/>
            <person name="Lucas S."/>
            <person name="Gonzalez B."/>
            <person name="Kyrpides N.C."/>
        </authorList>
    </citation>
    <scope>NUCLEOTIDE SEQUENCE [LARGE SCALE GENOMIC DNA]</scope>
    <source>
        <strain>JMP134 / LMG 1197</strain>
    </source>
</reference>
<organism>
    <name type="scientific">Cupriavidus pinatubonensis (strain JMP 134 / LMG 1197)</name>
    <name type="common">Cupriavidus necator (strain JMP 134)</name>
    <dbReference type="NCBI Taxonomy" id="264198"/>
    <lineage>
        <taxon>Bacteria</taxon>
        <taxon>Pseudomonadati</taxon>
        <taxon>Pseudomonadota</taxon>
        <taxon>Betaproteobacteria</taxon>
        <taxon>Burkholderiales</taxon>
        <taxon>Burkholderiaceae</taxon>
        <taxon>Cupriavidus</taxon>
    </lineage>
</organism>
<name>RL3_CUPPJ</name>
<gene>
    <name evidence="1" type="primary">rplC</name>
    <name type="ordered locus">Reut_A3179</name>
</gene>
<evidence type="ECO:0000255" key="1">
    <source>
        <dbReference type="HAMAP-Rule" id="MF_01325"/>
    </source>
</evidence>
<evidence type="ECO:0000256" key="2">
    <source>
        <dbReference type="SAM" id="MobiDB-lite"/>
    </source>
</evidence>
<evidence type="ECO:0000305" key="3"/>
<feature type="chain" id="PRO_0000241395" description="Large ribosomal subunit protein uL3">
    <location>
        <begin position="1"/>
        <end position="216"/>
    </location>
</feature>
<feature type="region of interest" description="Disordered" evidence="2">
    <location>
        <begin position="134"/>
        <end position="153"/>
    </location>
</feature>
<feature type="modified residue" description="N5-methylglutamine" evidence="1">
    <location>
        <position position="153"/>
    </location>
</feature>